<feature type="chain" id="PRO_1000070082" description="Membrane protein insertase YidC">
    <location>
        <begin position="1"/>
        <end position="548"/>
    </location>
</feature>
<feature type="transmembrane region" description="Helical" evidence="1">
    <location>
        <begin position="6"/>
        <end position="26"/>
    </location>
</feature>
<feature type="transmembrane region" description="Helical" evidence="1">
    <location>
        <begin position="350"/>
        <end position="370"/>
    </location>
</feature>
<feature type="transmembrane region" description="Helical" evidence="1">
    <location>
        <begin position="424"/>
        <end position="444"/>
    </location>
</feature>
<feature type="transmembrane region" description="Helical" evidence="1">
    <location>
        <begin position="458"/>
        <end position="478"/>
    </location>
</feature>
<feature type="transmembrane region" description="Helical" evidence="1">
    <location>
        <begin position="499"/>
        <end position="519"/>
    </location>
</feature>
<feature type="region of interest" description="Disordered" evidence="2">
    <location>
        <begin position="28"/>
        <end position="54"/>
    </location>
</feature>
<feature type="compositionally biased region" description="Low complexity" evidence="2">
    <location>
        <begin position="29"/>
        <end position="42"/>
    </location>
</feature>
<accession>A8ACL7</accession>
<dbReference type="EMBL" id="CP000822">
    <property type="protein sequence ID" value="ABV11230.1"/>
    <property type="molecule type" value="Genomic_DNA"/>
</dbReference>
<dbReference type="RefSeq" id="WP_012000810.1">
    <property type="nucleotide sequence ID" value="NC_009792.1"/>
</dbReference>
<dbReference type="SMR" id="A8ACL7"/>
<dbReference type="STRING" id="290338.CKO_00051"/>
<dbReference type="GeneID" id="45134357"/>
<dbReference type="KEGG" id="cko:CKO_00051"/>
<dbReference type="HOGENOM" id="CLU_016535_3_0_6"/>
<dbReference type="OrthoDB" id="9780552at2"/>
<dbReference type="Proteomes" id="UP000008148">
    <property type="component" value="Chromosome"/>
</dbReference>
<dbReference type="GO" id="GO:0005886">
    <property type="term" value="C:plasma membrane"/>
    <property type="evidence" value="ECO:0007669"/>
    <property type="project" value="UniProtKB-SubCell"/>
</dbReference>
<dbReference type="GO" id="GO:0032977">
    <property type="term" value="F:membrane insertase activity"/>
    <property type="evidence" value="ECO:0007669"/>
    <property type="project" value="InterPro"/>
</dbReference>
<dbReference type="GO" id="GO:0051205">
    <property type="term" value="P:protein insertion into membrane"/>
    <property type="evidence" value="ECO:0007669"/>
    <property type="project" value="TreeGrafter"/>
</dbReference>
<dbReference type="GO" id="GO:0015031">
    <property type="term" value="P:protein transport"/>
    <property type="evidence" value="ECO:0007669"/>
    <property type="project" value="UniProtKB-KW"/>
</dbReference>
<dbReference type="CDD" id="cd20070">
    <property type="entry name" value="5TM_YidC_Alb3"/>
    <property type="match status" value="1"/>
</dbReference>
<dbReference type="CDD" id="cd19961">
    <property type="entry name" value="EcYidC-like_peri"/>
    <property type="match status" value="1"/>
</dbReference>
<dbReference type="FunFam" id="2.70.98.90:FF:000001">
    <property type="entry name" value="Membrane protein insertase YidC"/>
    <property type="match status" value="1"/>
</dbReference>
<dbReference type="Gene3D" id="2.70.98.90">
    <property type="match status" value="1"/>
</dbReference>
<dbReference type="HAMAP" id="MF_01810">
    <property type="entry name" value="YidC_type1"/>
    <property type="match status" value="1"/>
</dbReference>
<dbReference type="InterPro" id="IPR019998">
    <property type="entry name" value="Membr_insert_YidC"/>
</dbReference>
<dbReference type="InterPro" id="IPR028053">
    <property type="entry name" value="Membr_insert_YidC_N"/>
</dbReference>
<dbReference type="InterPro" id="IPR001708">
    <property type="entry name" value="YidC/ALB3/OXA1/COX18"/>
</dbReference>
<dbReference type="InterPro" id="IPR028055">
    <property type="entry name" value="YidC/Oxa/ALB_C"/>
</dbReference>
<dbReference type="InterPro" id="IPR047196">
    <property type="entry name" value="YidC_ALB_C"/>
</dbReference>
<dbReference type="InterPro" id="IPR038221">
    <property type="entry name" value="YidC_periplasmic_sf"/>
</dbReference>
<dbReference type="NCBIfam" id="NF002351">
    <property type="entry name" value="PRK01318.1-1"/>
    <property type="match status" value="1"/>
</dbReference>
<dbReference type="NCBIfam" id="NF002352">
    <property type="entry name" value="PRK01318.1-3"/>
    <property type="match status" value="1"/>
</dbReference>
<dbReference type="NCBIfam" id="TIGR03593">
    <property type="entry name" value="yidC_nterm"/>
    <property type="match status" value="1"/>
</dbReference>
<dbReference type="NCBIfam" id="TIGR03592">
    <property type="entry name" value="yidC_oxa1_cterm"/>
    <property type="match status" value="1"/>
</dbReference>
<dbReference type="PANTHER" id="PTHR12428:SF65">
    <property type="entry name" value="CYTOCHROME C OXIDASE ASSEMBLY PROTEIN COX18, MITOCHONDRIAL"/>
    <property type="match status" value="1"/>
</dbReference>
<dbReference type="PANTHER" id="PTHR12428">
    <property type="entry name" value="OXA1"/>
    <property type="match status" value="1"/>
</dbReference>
<dbReference type="Pfam" id="PF02096">
    <property type="entry name" value="60KD_IMP"/>
    <property type="match status" value="1"/>
</dbReference>
<dbReference type="Pfam" id="PF14849">
    <property type="entry name" value="YidC_periplas"/>
    <property type="match status" value="1"/>
</dbReference>
<dbReference type="PRINTS" id="PR00701">
    <property type="entry name" value="60KDINNERMP"/>
</dbReference>
<dbReference type="PRINTS" id="PR01900">
    <property type="entry name" value="YIDCPROTEIN"/>
</dbReference>
<gene>
    <name evidence="1" type="primary">yidC</name>
    <name type="ordered locus">CKO_00051</name>
</gene>
<sequence>MDSQRNLLVIALLFVSFMIWQAWEQDKNPQPQTQQTTQTTTTAAGSAADQGVPASGQGKLITVKTDVLDLTINTRGGDVEQALLPTYPKELGSKEPFQLLETTPQFIYQAQSGLTGRDGPDNPANGPRPLYSVDNDTFVLADGQNELHVPMTWTDAAGNTFTKTFVLKRGEYAVNVNYSVQNAGEKPLEISTFGQLKQSINLPSHRDTGSSNFALHTFRGAAYSTPDEKYEKYKFDTIADNENLNVSSNGGWVAMLQQYFATAWIPRNDGTNNFYTANLGNGIAAIGYKSQPVLVQPGQTGAMTSTLWVGPEIQDKMAAVAPHLDLTVDYGWLWFISQPLFKLLKWIHSFLGNWGFSIIVITFIVRGIMYPLTKAQYTSMAKMRMLQPKIQAMRERLGDDKQRQSQEMMALYKAEKVNPLGGCFPLIIQMPIFLALYYMLMGSIELRHAPFALWIHDLSAQDPYYILPILMGVTMFFIQKMSPTTVTDPMQQKIMTFMPVIFTVFFLWFPSGLVLYYIVSNLVTIIQQQLIYRGLEKRGLHSREKKSS</sequence>
<proteinExistence type="inferred from homology"/>
<comment type="function">
    <text evidence="1">Required for the insertion and/or proper folding and/or complex formation of integral membrane proteins into the membrane. Involved in integration of membrane proteins that insert both dependently and independently of the Sec translocase complex, as well as at least some lipoproteins. Aids folding of multispanning membrane proteins.</text>
</comment>
<comment type="subunit">
    <text evidence="1">Interacts with the Sec translocase complex via SecD. Specifically interacts with transmembrane segments of nascent integral membrane proteins during membrane integration.</text>
</comment>
<comment type="subcellular location">
    <subcellularLocation>
        <location evidence="1">Cell inner membrane</location>
        <topology evidence="1">Multi-pass membrane protein</topology>
    </subcellularLocation>
</comment>
<comment type="similarity">
    <text evidence="1">Belongs to the OXA1/ALB3/YidC family. Type 1 subfamily.</text>
</comment>
<reference key="1">
    <citation type="submission" date="2007-08" db="EMBL/GenBank/DDBJ databases">
        <authorList>
            <consortium name="The Citrobacter koseri Genome Sequencing Project"/>
            <person name="McClelland M."/>
            <person name="Sanderson E.K."/>
            <person name="Porwollik S."/>
            <person name="Spieth J."/>
            <person name="Clifton W.S."/>
            <person name="Latreille P."/>
            <person name="Courtney L."/>
            <person name="Wang C."/>
            <person name="Pepin K."/>
            <person name="Bhonagiri V."/>
            <person name="Nash W."/>
            <person name="Johnson M."/>
            <person name="Thiruvilangam P."/>
            <person name="Wilson R."/>
        </authorList>
    </citation>
    <scope>NUCLEOTIDE SEQUENCE [LARGE SCALE GENOMIC DNA]</scope>
    <source>
        <strain>ATCC BAA-895 / CDC 4225-83 / SGSC4696</strain>
    </source>
</reference>
<evidence type="ECO:0000255" key="1">
    <source>
        <dbReference type="HAMAP-Rule" id="MF_01810"/>
    </source>
</evidence>
<evidence type="ECO:0000256" key="2">
    <source>
        <dbReference type="SAM" id="MobiDB-lite"/>
    </source>
</evidence>
<keyword id="KW-0997">Cell inner membrane</keyword>
<keyword id="KW-1003">Cell membrane</keyword>
<keyword id="KW-0143">Chaperone</keyword>
<keyword id="KW-0472">Membrane</keyword>
<keyword id="KW-0653">Protein transport</keyword>
<keyword id="KW-1185">Reference proteome</keyword>
<keyword id="KW-0812">Transmembrane</keyword>
<keyword id="KW-1133">Transmembrane helix</keyword>
<keyword id="KW-0813">Transport</keyword>
<protein>
    <recommendedName>
        <fullName evidence="1">Membrane protein insertase YidC</fullName>
    </recommendedName>
    <alternativeName>
        <fullName evidence="1">Foldase YidC</fullName>
    </alternativeName>
    <alternativeName>
        <fullName evidence="1">Membrane integrase YidC</fullName>
    </alternativeName>
    <alternativeName>
        <fullName evidence="1">Membrane protein YidC</fullName>
    </alternativeName>
</protein>
<name>YIDC_CITK8</name>
<organism>
    <name type="scientific">Citrobacter koseri (strain ATCC BAA-895 / CDC 4225-83 / SGSC4696)</name>
    <dbReference type="NCBI Taxonomy" id="290338"/>
    <lineage>
        <taxon>Bacteria</taxon>
        <taxon>Pseudomonadati</taxon>
        <taxon>Pseudomonadota</taxon>
        <taxon>Gammaproteobacteria</taxon>
        <taxon>Enterobacterales</taxon>
        <taxon>Enterobacteriaceae</taxon>
        <taxon>Citrobacter</taxon>
    </lineage>
</organism>